<keyword id="KW-0002">3D-structure</keyword>
<keyword id="KW-0249">Electron transport</keyword>
<keyword id="KW-0285">Flavoprotein</keyword>
<keyword id="KW-0288">FMN</keyword>
<keyword id="KW-0813">Transport</keyword>
<protein>
    <recommendedName>
        <fullName>Flavodoxin</fullName>
    </recommendedName>
</protein>
<comment type="function">
    <text>Electron-transfer proteins that function in various electron transport systems in microorganisms. Functionally interchangeable with ferredoxin.</text>
</comment>
<comment type="cofactor">
    <cofactor>
        <name>FMN</name>
        <dbReference type="ChEBI" id="CHEBI:58210"/>
    </cofactor>
</comment>
<comment type="similarity">
    <text evidence="2">Belongs to the flavodoxin family.</text>
</comment>
<reference key="1">
    <citation type="journal article" date="1992" name="Biochim. Biophys. Acta">
        <title>The primary structures of the flavodoxins from two strains of Desulfovibrio gigas. Cloning and nucleotide sequence of the structural genes.</title>
        <authorList>
            <person name="Helms L.R."/>
            <person name="Swenson R.P."/>
        </authorList>
    </citation>
    <scope>NUCLEOTIDE SEQUENCE [GENOMIC DNA]</scope>
    <source>
        <strain>ATCC 19364 / DSM 1382 / NCIMB 9332 / VKM B-1759</strain>
    </source>
</reference>
<accession>Q01095</accession>
<evidence type="ECO:0000255" key="1">
    <source>
        <dbReference type="PROSITE-ProRule" id="PRU00088"/>
    </source>
</evidence>
<evidence type="ECO:0000305" key="2"/>
<evidence type="ECO:0007829" key="3">
    <source>
        <dbReference type="PDB" id="4HEQ"/>
    </source>
</evidence>
<dbReference type="EMBL" id="X64766">
    <property type="protein sequence ID" value="CAA46013.1"/>
    <property type="molecule type" value="Genomic_DNA"/>
</dbReference>
<dbReference type="PIR" id="S24311">
    <property type="entry name" value="S24311"/>
</dbReference>
<dbReference type="RefSeq" id="WP_021760293.1">
    <property type="nucleotide sequence ID" value="NC_022444.1"/>
</dbReference>
<dbReference type="PDB" id="4HEQ">
    <property type="method" value="X-ray"/>
    <property type="resolution" value="1.30 A"/>
    <property type="chains" value="A/B=1-146"/>
</dbReference>
<dbReference type="PDBsum" id="4HEQ"/>
<dbReference type="SMR" id="Q01095"/>
<dbReference type="STRING" id="1121448.DGI_1615"/>
<dbReference type="OrthoDB" id="9790745at2"/>
<dbReference type="EvolutionaryTrace" id="Q01095"/>
<dbReference type="GO" id="GO:0009055">
    <property type="term" value="F:electron transfer activity"/>
    <property type="evidence" value="ECO:0007669"/>
    <property type="project" value="InterPro"/>
</dbReference>
<dbReference type="GO" id="GO:0010181">
    <property type="term" value="F:FMN binding"/>
    <property type="evidence" value="ECO:0007669"/>
    <property type="project" value="InterPro"/>
</dbReference>
<dbReference type="Gene3D" id="3.40.50.360">
    <property type="match status" value="1"/>
</dbReference>
<dbReference type="InterPro" id="IPR010087">
    <property type="entry name" value="Flav_short"/>
</dbReference>
<dbReference type="InterPro" id="IPR001094">
    <property type="entry name" value="Flavdoxin-like"/>
</dbReference>
<dbReference type="InterPro" id="IPR050619">
    <property type="entry name" value="Flavodoxin"/>
</dbReference>
<dbReference type="InterPro" id="IPR008254">
    <property type="entry name" value="Flavodoxin/NO_synth"/>
</dbReference>
<dbReference type="InterPro" id="IPR001226">
    <property type="entry name" value="Flavodoxin_CS"/>
</dbReference>
<dbReference type="InterPro" id="IPR029039">
    <property type="entry name" value="Flavoprotein-like_sf"/>
</dbReference>
<dbReference type="NCBIfam" id="TIGR01753">
    <property type="entry name" value="flav_short"/>
    <property type="match status" value="1"/>
</dbReference>
<dbReference type="PANTHER" id="PTHR42809:SF1">
    <property type="entry name" value="FLAVODOXIN 1"/>
    <property type="match status" value="1"/>
</dbReference>
<dbReference type="PANTHER" id="PTHR42809">
    <property type="entry name" value="FLAVODOXIN 2"/>
    <property type="match status" value="1"/>
</dbReference>
<dbReference type="Pfam" id="PF00258">
    <property type="entry name" value="Flavodoxin_1"/>
    <property type="match status" value="1"/>
</dbReference>
<dbReference type="PRINTS" id="PR00369">
    <property type="entry name" value="FLAVODOXIN"/>
</dbReference>
<dbReference type="SUPFAM" id="SSF52218">
    <property type="entry name" value="Flavoproteins"/>
    <property type="match status" value="1"/>
</dbReference>
<dbReference type="PROSITE" id="PS00201">
    <property type="entry name" value="FLAVODOXIN"/>
    <property type="match status" value="1"/>
</dbReference>
<dbReference type="PROSITE" id="PS50902">
    <property type="entry name" value="FLAVODOXIN_LIKE"/>
    <property type="match status" value="1"/>
</dbReference>
<name>FLAV_MEGG1</name>
<organism>
    <name type="scientific">Megalodesulfovibrio gigas (strain ATCC 19364 / DSM 1382 / NCIMB 9332 / VKM B-1759)</name>
    <name type="common">Desulfovibrio gigas</name>
    <dbReference type="NCBI Taxonomy" id="1121448"/>
    <lineage>
        <taxon>Bacteria</taxon>
        <taxon>Pseudomonadati</taxon>
        <taxon>Thermodesulfobacteriota</taxon>
        <taxon>Desulfovibrionia</taxon>
        <taxon>Desulfovibrionales</taxon>
        <taxon>Desulfovibrionaceae</taxon>
        <taxon>Megalodesulfovibrio</taxon>
    </lineage>
</organism>
<feature type="chain" id="PRO_0000171617" description="Flavodoxin">
    <location>
        <begin position="1"/>
        <end position="146"/>
    </location>
</feature>
<feature type="domain" description="Flavodoxin-like" evidence="1">
    <location>
        <begin position="4"/>
        <end position="143"/>
    </location>
</feature>
<feature type="strand" evidence="3">
    <location>
        <begin position="3"/>
        <end position="9"/>
    </location>
</feature>
<feature type="strand" evidence="3">
    <location>
        <begin position="11"/>
        <end position="13"/>
    </location>
</feature>
<feature type="helix" evidence="3">
    <location>
        <begin position="14"/>
        <end position="28"/>
    </location>
</feature>
<feature type="strand" evidence="3">
    <location>
        <begin position="32"/>
        <end position="37"/>
    </location>
</feature>
<feature type="helix" evidence="3">
    <location>
        <begin position="38"/>
        <end position="40"/>
    </location>
</feature>
<feature type="turn" evidence="3">
    <location>
        <begin position="44"/>
        <end position="49"/>
    </location>
</feature>
<feature type="strand" evidence="3">
    <location>
        <begin position="51"/>
        <end position="57"/>
    </location>
</feature>
<feature type="strand" evidence="3">
    <location>
        <begin position="62"/>
        <end position="67"/>
    </location>
</feature>
<feature type="helix" evidence="3">
    <location>
        <begin position="71"/>
        <end position="76"/>
    </location>
</feature>
<feature type="helix" evidence="3">
    <location>
        <begin position="78"/>
        <end position="80"/>
    </location>
</feature>
<feature type="strand" evidence="3">
    <location>
        <begin position="87"/>
        <end position="94"/>
    </location>
</feature>
<feature type="strand" evidence="3">
    <location>
        <begin position="98"/>
        <end position="100"/>
    </location>
</feature>
<feature type="helix" evidence="3">
    <location>
        <begin position="103"/>
        <end position="114"/>
    </location>
</feature>
<feature type="strand" evidence="3">
    <location>
        <begin position="124"/>
        <end position="129"/>
    </location>
</feature>
<feature type="helix" evidence="3">
    <location>
        <begin position="132"/>
        <end position="145"/>
    </location>
</feature>
<proteinExistence type="evidence at protein level"/>
<sequence length="146" mass="15470">MPKALIVYGSTTGNTEGVAEAIAKTLNSEGMETTVVNVADVTAPGLAEGYDVVLLGCSTWGDDEIELQEDFVPLYEDLDRAGLKDKKVGVFGCGDSSYTYFCGAVDVIEKKAEELGATLVASSLKIDGEPDSAEVLDWAREVLARV</sequence>